<dbReference type="EC" id="4.2.1.59" evidence="1"/>
<dbReference type="EMBL" id="CP000269">
    <property type="protein sequence ID" value="ABR89019.1"/>
    <property type="status" value="ALT_INIT"/>
    <property type="molecule type" value="Genomic_DNA"/>
</dbReference>
<dbReference type="RefSeq" id="WP_041296526.1">
    <property type="nucleotide sequence ID" value="NC_009659.1"/>
</dbReference>
<dbReference type="SMR" id="A6SZP0"/>
<dbReference type="STRING" id="375286.mma_2047"/>
<dbReference type="KEGG" id="mms:mma_2047"/>
<dbReference type="eggNOG" id="COG0764">
    <property type="taxonomic scope" value="Bacteria"/>
</dbReference>
<dbReference type="HOGENOM" id="CLU_078912_1_0_4"/>
<dbReference type="OrthoDB" id="9772788at2"/>
<dbReference type="Proteomes" id="UP000006388">
    <property type="component" value="Chromosome"/>
</dbReference>
<dbReference type="GO" id="GO:0005737">
    <property type="term" value="C:cytoplasm"/>
    <property type="evidence" value="ECO:0007669"/>
    <property type="project" value="UniProtKB-SubCell"/>
</dbReference>
<dbReference type="GO" id="GO:0016020">
    <property type="term" value="C:membrane"/>
    <property type="evidence" value="ECO:0007669"/>
    <property type="project" value="GOC"/>
</dbReference>
<dbReference type="GO" id="GO:0019171">
    <property type="term" value="F:(3R)-hydroxyacyl-[acyl-carrier-protein] dehydratase activity"/>
    <property type="evidence" value="ECO:0007669"/>
    <property type="project" value="UniProtKB-EC"/>
</dbReference>
<dbReference type="GO" id="GO:0006633">
    <property type="term" value="P:fatty acid biosynthetic process"/>
    <property type="evidence" value="ECO:0007669"/>
    <property type="project" value="UniProtKB-UniRule"/>
</dbReference>
<dbReference type="GO" id="GO:0009245">
    <property type="term" value="P:lipid A biosynthetic process"/>
    <property type="evidence" value="ECO:0007669"/>
    <property type="project" value="UniProtKB-UniRule"/>
</dbReference>
<dbReference type="CDD" id="cd01288">
    <property type="entry name" value="FabZ"/>
    <property type="match status" value="1"/>
</dbReference>
<dbReference type="FunFam" id="3.10.129.10:FF:000001">
    <property type="entry name" value="3-hydroxyacyl-[acyl-carrier-protein] dehydratase FabZ"/>
    <property type="match status" value="1"/>
</dbReference>
<dbReference type="Gene3D" id="3.10.129.10">
    <property type="entry name" value="Hotdog Thioesterase"/>
    <property type="match status" value="1"/>
</dbReference>
<dbReference type="HAMAP" id="MF_00406">
    <property type="entry name" value="FabZ"/>
    <property type="match status" value="1"/>
</dbReference>
<dbReference type="InterPro" id="IPR013114">
    <property type="entry name" value="FabA_FabZ"/>
</dbReference>
<dbReference type="InterPro" id="IPR010084">
    <property type="entry name" value="FabZ"/>
</dbReference>
<dbReference type="InterPro" id="IPR029069">
    <property type="entry name" value="HotDog_dom_sf"/>
</dbReference>
<dbReference type="NCBIfam" id="TIGR01750">
    <property type="entry name" value="fabZ"/>
    <property type="match status" value="1"/>
</dbReference>
<dbReference type="NCBIfam" id="NF000582">
    <property type="entry name" value="PRK00006.1"/>
    <property type="match status" value="1"/>
</dbReference>
<dbReference type="PANTHER" id="PTHR30272">
    <property type="entry name" value="3-HYDROXYACYL-[ACYL-CARRIER-PROTEIN] DEHYDRATASE"/>
    <property type="match status" value="1"/>
</dbReference>
<dbReference type="PANTHER" id="PTHR30272:SF1">
    <property type="entry name" value="3-HYDROXYACYL-[ACYL-CARRIER-PROTEIN] DEHYDRATASE"/>
    <property type="match status" value="1"/>
</dbReference>
<dbReference type="Pfam" id="PF07977">
    <property type="entry name" value="FabA"/>
    <property type="match status" value="1"/>
</dbReference>
<dbReference type="SUPFAM" id="SSF54637">
    <property type="entry name" value="Thioesterase/thiol ester dehydrase-isomerase"/>
    <property type="match status" value="1"/>
</dbReference>
<evidence type="ECO:0000255" key="1">
    <source>
        <dbReference type="HAMAP-Rule" id="MF_00406"/>
    </source>
</evidence>
<evidence type="ECO:0000305" key="2"/>
<feature type="chain" id="PRO_0000340783" description="3-hydroxyacyl-[acyl-carrier-protein] dehydratase FabZ">
    <location>
        <begin position="1"/>
        <end position="156"/>
    </location>
</feature>
<feature type="active site" evidence="1">
    <location>
        <position position="50"/>
    </location>
</feature>
<organism>
    <name type="scientific">Janthinobacterium sp. (strain Marseille)</name>
    <name type="common">Minibacterium massiliensis</name>
    <dbReference type="NCBI Taxonomy" id="375286"/>
    <lineage>
        <taxon>Bacteria</taxon>
        <taxon>Pseudomonadati</taxon>
        <taxon>Pseudomonadota</taxon>
        <taxon>Betaproteobacteria</taxon>
        <taxon>Burkholderiales</taxon>
        <taxon>Oxalobacteraceae</taxon>
        <taxon>Janthinobacterium</taxon>
    </lineage>
</organism>
<proteinExistence type="inferred from homology"/>
<gene>
    <name evidence="1" type="primary">fabZ</name>
    <name type="ordered locus">mma_2047</name>
</gene>
<reference key="1">
    <citation type="journal article" date="2007" name="PLoS Genet.">
        <title>Genome analysis of Minibacterium massiliensis highlights the convergent evolution of water-living bacteria.</title>
        <authorList>
            <person name="Audic S."/>
            <person name="Robert C."/>
            <person name="Campagna B."/>
            <person name="Parinello H."/>
            <person name="Claverie J.-M."/>
            <person name="Raoult D."/>
            <person name="Drancourt M."/>
        </authorList>
    </citation>
    <scope>NUCLEOTIDE SEQUENCE [LARGE SCALE GENOMIC DNA]</scope>
    <source>
        <strain>Marseille</strain>
    </source>
</reference>
<keyword id="KW-0963">Cytoplasm</keyword>
<keyword id="KW-0441">Lipid A biosynthesis</keyword>
<keyword id="KW-0444">Lipid biosynthesis</keyword>
<keyword id="KW-0443">Lipid metabolism</keyword>
<keyword id="KW-0456">Lyase</keyword>
<comment type="function">
    <text evidence="1">Involved in unsaturated fatty acids biosynthesis. Catalyzes the dehydration of short chain beta-hydroxyacyl-ACPs and long chain saturated and unsaturated beta-hydroxyacyl-ACPs.</text>
</comment>
<comment type="catalytic activity">
    <reaction evidence="1">
        <text>a (3R)-hydroxyacyl-[ACP] = a (2E)-enoyl-[ACP] + H2O</text>
        <dbReference type="Rhea" id="RHEA:13097"/>
        <dbReference type="Rhea" id="RHEA-COMP:9925"/>
        <dbReference type="Rhea" id="RHEA-COMP:9945"/>
        <dbReference type="ChEBI" id="CHEBI:15377"/>
        <dbReference type="ChEBI" id="CHEBI:78784"/>
        <dbReference type="ChEBI" id="CHEBI:78827"/>
        <dbReference type="EC" id="4.2.1.59"/>
    </reaction>
</comment>
<comment type="subcellular location">
    <subcellularLocation>
        <location evidence="1">Cytoplasm</location>
    </subcellularLocation>
</comment>
<comment type="similarity">
    <text evidence="1">Belongs to the thioester dehydratase family. FabZ subfamily.</text>
</comment>
<comment type="sequence caution" evidence="2">
    <conflict type="erroneous initiation">
        <sequence resource="EMBL-CDS" id="ABR89019"/>
    </conflict>
</comment>
<accession>A6SZP0</accession>
<sequence length="156" mass="17416">MKTLDINQIKQYLPHRYPLLLVDRVLNWESGKSITAIKNVTVNEEFFNGHFPHKPVMPGVLMIEALAQTAALLSFLTMGQKPDDNSVVYFIGIDGARFKRPVEPGDQLKMEVEILRNARGIWKYKATGSVDGQLALEAELMCTMRTINDASPAAGQ</sequence>
<name>FABZ_JANMA</name>
<protein>
    <recommendedName>
        <fullName evidence="1">3-hydroxyacyl-[acyl-carrier-protein] dehydratase FabZ</fullName>
        <ecNumber evidence="1">4.2.1.59</ecNumber>
    </recommendedName>
    <alternativeName>
        <fullName evidence="1">(3R)-hydroxymyristoyl-[acyl-carrier-protein] dehydratase</fullName>
        <shortName evidence="1">(3R)-hydroxymyristoyl-ACP dehydrase</shortName>
    </alternativeName>
    <alternativeName>
        <fullName evidence="1">Beta-hydroxyacyl-ACP dehydratase</fullName>
    </alternativeName>
</protein>